<accession>B4SBZ3</accession>
<evidence type="ECO:0000255" key="1">
    <source>
        <dbReference type="HAMAP-Rule" id="MF_01394"/>
    </source>
</evidence>
<protein>
    <recommendedName>
        <fullName evidence="1">NADH-quinone oxidoreductase subunit A</fullName>
        <ecNumber evidence="1">7.1.1.-</ecNumber>
    </recommendedName>
    <alternativeName>
        <fullName evidence="1">NADH dehydrogenase I subunit A</fullName>
    </alternativeName>
    <alternativeName>
        <fullName evidence="1">NDH-1 subunit A</fullName>
    </alternativeName>
    <alternativeName>
        <fullName evidence="1">NUO1</fullName>
    </alternativeName>
</protein>
<name>NUOA_PELPB</name>
<comment type="function">
    <text evidence="1">NDH-1 shuttles electrons from NADH, via FMN and iron-sulfur (Fe-S) centers, to quinones in the respiratory chain. The immediate electron acceptor for the enzyme in this species is believed to be a menaquinone. Couples the redox reaction to proton translocation (for every two electrons transferred, four hydrogen ions are translocated across the cytoplasmic membrane), and thus conserves the redox energy in a proton gradient.</text>
</comment>
<comment type="catalytic activity">
    <reaction evidence="1">
        <text>a quinone + NADH + 5 H(+)(in) = a quinol + NAD(+) + 4 H(+)(out)</text>
        <dbReference type="Rhea" id="RHEA:57888"/>
        <dbReference type="ChEBI" id="CHEBI:15378"/>
        <dbReference type="ChEBI" id="CHEBI:24646"/>
        <dbReference type="ChEBI" id="CHEBI:57540"/>
        <dbReference type="ChEBI" id="CHEBI:57945"/>
        <dbReference type="ChEBI" id="CHEBI:132124"/>
    </reaction>
</comment>
<comment type="subunit">
    <text evidence="1">NDH-1 is composed of 14 different subunits. Subunits NuoA, H, J, K, L, M, N constitute the membrane sector of the complex.</text>
</comment>
<comment type="subcellular location">
    <subcellularLocation>
        <location evidence="1">Cell inner membrane</location>
        <topology evidence="1">Multi-pass membrane protein</topology>
    </subcellularLocation>
</comment>
<comment type="similarity">
    <text evidence="1">Belongs to the complex I subunit 3 family.</text>
</comment>
<proteinExistence type="inferred from homology"/>
<keyword id="KW-0997">Cell inner membrane</keyword>
<keyword id="KW-1003">Cell membrane</keyword>
<keyword id="KW-0472">Membrane</keyword>
<keyword id="KW-0520">NAD</keyword>
<keyword id="KW-0874">Quinone</keyword>
<keyword id="KW-1185">Reference proteome</keyword>
<keyword id="KW-1278">Translocase</keyword>
<keyword id="KW-0812">Transmembrane</keyword>
<keyword id="KW-1133">Transmembrane helix</keyword>
<keyword id="KW-0813">Transport</keyword>
<reference key="1">
    <citation type="submission" date="2008-06" db="EMBL/GenBank/DDBJ databases">
        <title>Complete sequence of Pelodictyon phaeoclathratiforme BU-1.</title>
        <authorList>
            <consortium name="US DOE Joint Genome Institute"/>
            <person name="Lucas S."/>
            <person name="Copeland A."/>
            <person name="Lapidus A."/>
            <person name="Glavina del Rio T."/>
            <person name="Dalin E."/>
            <person name="Tice H."/>
            <person name="Bruce D."/>
            <person name="Goodwin L."/>
            <person name="Pitluck S."/>
            <person name="Schmutz J."/>
            <person name="Larimer F."/>
            <person name="Land M."/>
            <person name="Hauser L."/>
            <person name="Kyrpides N."/>
            <person name="Mikhailova N."/>
            <person name="Liu Z."/>
            <person name="Li T."/>
            <person name="Zhao F."/>
            <person name="Overmann J."/>
            <person name="Bryant D.A."/>
            <person name="Richardson P."/>
        </authorList>
    </citation>
    <scope>NUCLEOTIDE SEQUENCE [LARGE SCALE GENOMIC DNA]</scope>
    <source>
        <strain>DSM 5477 / BU-1</strain>
    </source>
</reference>
<sequence length="143" mass="15770">MDQTLSNFGNVFAFLALGVVFVAGGYLTARMLRPSRPNPAKNSTYECGEEAVGSAWVKFNIRFYVVALIFIIFDVEVVFLYPWATVFKQLGEFALIEALVFAGILVLGLAYAWVKGDLDWVRPTPNIPKMPEMPSGKSGALRG</sequence>
<gene>
    <name evidence="1" type="primary">nuoA</name>
    <name type="ordered locus">Ppha_1873</name>
</gene>
<dbReference type="EC" id="7.1.1.-" evidence="1"/>
<dbReference type="EMBL" id="CP001110">
    <property type="protein sequence ID" value="ACF44099.1"/>
    <property type="molecule type" value="Genomic_DNA"/>
</dbReference>
<dbReference type="RefSeq" id="WP_012508583.1">
    <property type="nucleotide sequence ID" value="NC_011060.1"/>
</dbReference>
<dbReference type="SMR" id="B4SBZ3"/>
<dbReference type="STRING" id="324925.Ppha_1873"/>
<dbReference type="KEGG" id="pph:Ppha_1873"/>
<dbReference type="eggNOG" id="COG0838">
    <property type="taxonomic scope" value="Bacteria"/>
</dbReference>
<dbReference type="HOGENOM" id="CLU_119549_1_0_10"/>
<dbReference type="OrthoDB" id="9791970at2"/>
<dbReference type="Proteomes" id="UP000002724">
    <property type="component" value="Chromosome"/>
</dbReference>
<dbReference type="GO" id="GO:0030964">
    <property type="term" value="C:NADH dehydrogenase complex"/>
    <property type="evidence" value="ECO:0007669"/>
    <property type="project" value="TreeGrafter"/>
</dbReference>
<dbReference type="GO" id="GO:0005886">
    <property type="term" value="C:plasma membrane"/>
    <property type="evidence" value="ECO:0007669"/>
    <property type="project" value="UniProtKB-SubCell"/>
</dbReference>
<dbReference type="GO" id="GO:0008137">
    <property type="term" value="F:NADH dehydrogenase (ubiquinone) activity"/>
    <property type="evidence" value="ECO:0007669"/>
    <property type="project" value="InterPro"/>
</dbReference>
<dbReference type="GO" id="GO:0050136">
    <property type="term" value="F:NADH:ubiquinone reductase (non-electrogenic) activity"/>
    <property type="evidence" value="ECO:0007669"/>
    <property type="project" value="UniProtKB-UniRule"/>
</dbReference>
<dbReference type="GO" id="GO:0048038">
    <property type="term" value="F:quinone binding"/>
    <property type="evidence" value="ECO:0007669"/>
    <property type="project" value="UniProtKB-KW"/>
</dbReference>
<dbReference type="Gene3D" id="1.20.58.1610">
    <property type="entry name" value="NADH:ubiquinone/plastoquinone oxidoreductase, chain 3"/>
    <property type="match status" value="1"/>
</dbReference>
<dbReference type="HAMAP" id="MF_01394">
    <property type="entry name" value="NDH1_NuoA"/>
    <property type="match status" value="1"/>
</dbReference>
<dbReference type="InterPro" id="IPR023043">
    <property type="entry name" value="NAD(P)H_OxRDtase_bac/plastid"/>
</dbReference>
<dbReference type="InterPro" id="IPR000440">
    <property type="entry name" value="NADH_UbQ/plastoQ_OxRdtase_su3"/>
</dbReference>
<dbReference type="InterPro" id="IPR038430">
    <property type="entry name" value="NDAH_ubi_oxred_su3_sf"/>
</dbReference>
<dbReference type="PANTHER" id="PTHR11058">
    <property type="entry name" value="NADH-UBIQUINONE OXIDOREDUCTASE CHAIN 3"/>
    <property type="match status" value="1"/>
</dbReference>
<dbReference type="PANTHER" id="PTHR11058:SF9">
    <property type="entry name" value="NADH-UBIQUINONE OXIDOREDUCTASE CHAIN 3"/>
    <property type="match status" value="1"/>
</dbReference>
<dbReference type="Pfam" id="PF00507">
    <property type="entry name" value="Oxidored_q4"/>
    <property type="match status" value="1"/>
</dbReference>
<organism>
    <name type="scientific">Pelodictyon phaeoclathratiforme (strain DSM 5477 / BU-1)</name>
    <dbReference type="NCBI Taxonomy" id="324925"/>
    <lineage>
        <taxon>Bacteria</taxon>
        <taxon>Pseudomonadati</taxon>
        <taxon>Chlorobiota</taxon>
        <taxon>Chlorobiia</taxon>
        <taxon>Chlorobiales</taxon>
        <taxon>Chlorobiaceae</taxon>
        <taxon>Chlorobium/Pelodictyon group</taxon>
        <taxon>Pelodictyon</taxon>
    </lineage>
</organism>
<feature type="chain" id="PRO_0000362713" description="NADH-quinone oxidoreductase subunit A">
    <location>
        <begin position="1"/>
        <end position="143"/>
    </location>
</feature>
<feature type="transmembrane region" description="Helical" evidence="1">
    <location>
        <begin position="8"/>
        <end position="28"/>
    </location>
</feature>
<feature type="transmembrane region" description="Helical" evidence="1">
    <location>
        <begin position="63"/>
        <end position="83"/>
    </location>
</feature>
<feature type="transmembrane region" description="Helical" evidence="1">
    <location>
        <begin position="93"/>
        <end position="113"/>
    </location>
</feature>